<proteinExistence type="evidence at transcript level"/>
<comment type="function">
    <text>The primary product of this enzyme is 4,2',4',6'-tetrahydroxychalcone (also termed naringenin-chalcone or chalcone) which can under specific conditions spontaneously isomerize into naringenin.</text>
</comment>
<comment type="catalytic activity">
    <reaction evidence="1">
        <text>(E)-4-coumaroyl-CoA + 3 malonyl-CoA + 3 H(+) = 2',4,4',6'-tetrahydroxychalcone + 3 CO2 + 4 CoA</text>
        <dbReference type="Rhea" id="RHEA:11128"/>
        <dbReference type="ChEBI" id="CHEBI:15378"/>
        <dbReference type="ChEBI" id="CHEBI:15413"/>
        <dbReference type="ChEBI" id="CHEBI:16526"/>
        <dbReference type="ChEBI" id="CHEBI:57287"/>
        <dbReference type="ChEBI" id="CHEBI:57384"/>
        <dbReference type="ChEBI" id="CHEBI:85008"/>
        <dbReference type="EC" id="2.3.1.74"/>
    </reaction>
</comment>
<comment type="pathway">
    <text>Secondary metabolite biosynthesis; flavonoid biosynthesis.</text>
</comment>
<comment type="similarity">
    <text evidence="2">Belongs to the thiolase-like superfamily. Chalcone/stilbene synthases family.</text>
</comment>
<evidence type="ECO:0000255" key="1">
    <source>
        <dbReference type="PROSITE-ProRule" id="PRU10023"/>
    </source>
</evidence>
<evidence type="ECO:0000305" key="2"/>
<sequence length="389" mass="42730">MVTVEEVRRAQRAKGPATIMAIGTATPSNCVDQSTYPDYYFRITNSEHMTELKEKFKRMCDKSMINKRYMHLTEEILKENPNICEYMAPSLDARQDIVVVEVPKLGKEAAQKAIKEWGQPKSKITHVVFCTTSGVDMPGADYQLTKLLGLRPSVKRLMMYQQGCFAGGTVIRLAKDLAENNKGARVLVVCSEITAVTFRGPSDTHLDSMVGQALFGDRAAAMIIGSDPLPEVERPLFELVSAAQTLLPDSEGAIDGHLREVGLTFHLLKDVPGLISKNIEKSLIEAFQPLGISDWNSIFWIAHPGGPAILDQVELKLSLKPEKLRATRQVLSDYGNMSSACVLFILDEMRKASSKEGLSTTGEGLDWGVLFGFGPGLTVETVVLHSVST</sequence>
<organism>
    <name type="scientific">Solanum lycopersicum</name>
    <name type="common">Tomato</name>
    <name type="synonym">Lycopersicon esculentum</name>
    <dbReference type="NCBI Taxonomy" id="4081"/>
    <lineage>
        <taxon>Eukaryota</taxon>
        <taxon>Viridiplantae</taxon>
        <taxon>Streptophyta</taxon>
        <taxon>Embryophyta</taxon>
        <taxon>Tracheophyta</taxon>
        <taxon>Spermatophyta</taxon>
        <taxon>Magnoliopsida</taxon>
        <taxon>eudicotyledons</taxon>
        <taxon>Gunneridae</taxon>
        <taxon>Pentapetalae</taxon>
        <taxon>asterids</taxon>
        <taxon>lamiids</taxon>
        <taxon>Solanales</taxon>
        <taxon>Solanaceae</taxon>
        <taxon>Solanoideae</taxon>
        <taxon>Solaneae</taxon>
        <taxon>Solanum</taxon>
        <taxon>Solanum subgen. Lycopersicon</taxon>
    </lineage>
</organism>
<reference key="1">
    <citation type="journal article" date="1990" name="Mol. Gen. Genet.">
        <title>Molecular genetic analysis of chalcone synthase in Lycopersicon esculentum and an anthocyanin-deficient mutant.</title>
        <authorList>
            <person name="O'Neill S.D."/>
            <person name="Tong Y."/>
            <person name="Spoerlein B."/>
            <person name="Forkmann G."/>
            <person name="Yoder J.I."/>
        </authorList>
    </citation>
    <scope>NUCLEOTIDE SEQUENCE [MRNA]</scope>
    <source>
        <tissue>Cotyledon</tissue>
        <tissue>Hypocotyl</tissue>
        <tissue>Leaf</tissue>
    </source>
</reference>
<keyword id="KW-0012">Acyltransferase</keyword>
<keyword id="KW-0284">Flavonoid biosynthesis</keyword>
<keyword id="KW-1185">Reference proteome</keyword>
<keyword id="KW-0808">Transferase</keyword>
<name>CHS2_SOLLC</name>
<feature type="chain" id="PRO_0000216002" description="Chalcone synthase 2">
    <location>
        <begin position="1"/>
        <end position="389"/>
    </location>
</feature>
<feature type="active site" evidence="1">
    <location>
        <position position="164"/>
    </location>
</feature>
<protein>
    <recommendedName>
        <fullName>Chalcone synthase 2</fullName>
        <ecNumber>2.3.1.74</ecNumber>
    </recommendedName>
    <alternativeName>
        <fullName>Naringenin-chalcone synthase 2</fullName>
    </alternativeName>
</protein>
<dbReference type="EC" id="2.3.1.74"/>
<dbReference type="EMBL" id="X55195">
    <property type="protein sequence ID" value="CAA38981.1"/>
    <property type="molecule type" value="mRNA"/>
</dbReference>
<dbReference type="PIR" id="S12224">
    <property type="entry name" value="S12224"/>
</dbReference>
<dbReference type="SMR" id="P23419"/>
<dbReference type="FunCoup" id="P23419">
    <property type="interactions" value="47"/>
</dbReference>
<dbReference type="STRING" id="4081.P23419"/>
<dbReference type="PaxDb" id="4081-Solyc05g053550.2.1"/>
<dbReference type="eggNOG" id="ENOG502QRSY">
    <property type="taxonomic scope" value="Eukaryota"/>
</dbReference>
<dbReference type="InParanoid" id="P23419"/>
<dbReference type="UniPathway" id="UPA00154"/>
<dbReference type="Proteomes" id="UP000004994">
    <property type="component" value="Unplaced"/>
</dbReference>
<dbReference type="ExpressionAtlas" id="P23419">
    <property type="expression patterns" value="baseline and differential"/>
</dbReference>
<dbReference type="GO" id="GO:0016747">
    <property type="term" value="F:acyltransferase activity, transferring groups other than amino-acyl groups"/>
    <property type="evidence" value="ECO:0000318"/>
    <property type="project" value="GO_Central"/>
</dbReference>
<dbReference type="GO" id="GO:0016210">
    <property type="term" value="F:naringenin-chalcone synthase activity"/>
    <property type="evidence" value="ECO:0007669"/>
    <property type="project" value="UniProtKB-EC"/>
</dbReference>
<dbReference type="GO" id="GO:0009813">
    <property type="term" value="P:flavonoid biosynthetic process"/>
    <property type="evidence" value="ECO:0007669"/>
    <property type="project" value="UniProtKB-UniPathway"/>
</dbReference>
<dbReference type="GO" id="GO:0030639">
    <property type="term" value="P:polyketide biosynthetic process"/>
    <property type="evidence" value="ECO:0000318"/>
    <property type="project" value="GO_Central"/>
</dbReference>
<dbReference type="CDD" id="cd00831">
    <property type="entry name" value="CHS_like"/>
    <property type="match status" value="1"/>
</dbReference>
<dbReference type="FunFam" id="3.40.47.10:FF:000014">
    <property type="entry name" value="Chalcone synthase 1"/>
    <property type="match status" value="1"/>
</dbReference>
<dbReference type="FunFam" id="3.40.47.10:FF:000025">
    <property type="entry name" value="Chalcone synthase 2"/>
    <property type="match status" value="1"/>
</dbReference>
<dbReference type="Gene3D" id="3.40.47.10">
    <property type="match status" value="2"/>
</dbReference>
<dbReference type="InterPro" id="IPR012328">
    <property type="entry name" value="Chalcone/stilbene_synt_C"/>
</dbReference>
<dbReference type="InterPro" id="IPR001099">
    <property type="entry name" value="Chalcone/stilbene_synt_N"/>
</dbReference>
<dbReference type="InterPro" id="IPR018088">
    <property type="entry name" value="Chalcone/stilbene_synthase_AS"/>
</dbReference>
<dbReference type="InterPro" id="IPR011141">
    <property type="entry name" value="Polyketide_synthase_type-III"/>
</dbReference>
<dbReference type="InterPro" id="IPR016039">
    <property type="entry name" value="Thiolase-like"/>
</dbReference>
<dbReference type="PANTHER" id="PTHR11877:SF94">
    <property type="entry name" value="CHALCONE SYNTHASE 2"/>
    <property type="match status" value="1"/>
</dbReference>
<dbReference type="PANTHER" id="PTHR11877">
    <property type="entry name" value="HYDROXYMETHYLGLUTARYL-COA SYNTHASE"/>
    <property type="match status" value="1"/>
</dbReference>
<dbReference type="Pfam" id="PF02797">
    <property type="entry name" value="Chal_sti_synt_C"/>
    <property type="match status" value="1"/>
</dbReference>
<dbReference type="Pfam" id="PF00195">
    <property type="entry name" value="Chal_sti_synt_N"/>
    <property type="match status" value="1"/>
</dbReference>
<dbReference type="PIRSF" id="PIRSF000451">
    <property type="entry name" value="PKS_III"/>
    <property type="match status" value="1"/>
</dbReference>
<dbReference type="SUPFAM" id="SSF53901">
    <property type="entry name" value="Thiolase-like"/>
    <property type="match status" value="2"/>
</dbReference>
<dbReference type="PROSITE" id="PS00441">
    <property type="entry name" value="CHALCONE_SYNTH"/>
    <property type="match status" value="1"/>
</dbReference>
<accession>P23419</accession>
<gene>
    <name type="primary">CHS2</name>
</gene>